<proteinExistence type="inferred from homology"/>
<protein>
    <recommendedName>
        <fullName evidence="1">Small ribosomal subunit protein uS8</fullName>
    </recommendedName>
    <alternativeName>
        <fullName evidence="2">30S ribosomal protein S8</fullName>
    </alternativeName>
</protein>
<feature type="chain" id="PRO_1000085909" description="Small ribosomal subunit protein uS8">
    <location>
        <begin position="1"/>
        <end position="132"/>
    </location>
</feature>
<name>RS8_BACCN</name>
<dbReference type="EMBL" id="CP000764">
    <property type="protein sequence ID" value="ABS20492.1"/>
    <property type="molecule type" value="Genomic_DNA"/>
</dbReference>
<dbReference type="RefSeq" id="WP_011983257.1">
    <property type="nucleotide sequence ID" value="NC_009674.1"/>
</dbReference>
<dbReference type="SMR" id="A7GK34"/>
<dbReference type="STRING" id="315749.Bcer98_0118"/>
<dbReference type="GeneID" id="33895439"/>
<dbReference type="KEGG" id="bcy:Bcer98_0118"/>
<dbReference type="eggNOG" id="COG0096">
    <property type="taxonomic scope" value="Bacteria"/>
</dbReference>
<dbReference type="HOGENOM" id="CLU_098428_0_2_9"/>
<dbReference type="OrthoDB" id="9802617at2"/>
<dbReference type="Proteomes" id="UP000002300">
    <property type="component" value="Chromosome"/>
</dbReference>
<dbReference type="GO" id="GO:1990904">
    <property type="term" value="C:ribonucleoprotein complex"/>
    <property type="evidence" value="ECO:0007669"/>
    <property type="project" value="UniProtKB-KW"/>
</dbReference>
<dbReference type="GO" id="GO:0005840">
    <property type="term" value="C:ribosome"/>
    <property type="evidence" value="ECO:0007669"/>
    <property type="project" value="UniProtKB-KW"/>
</dbReference>
<dbReference type="GO" id="GO:0019843">
    <property type="term" value="F:rRNA binding"/>
    <property type="evidence" value="ECO:0007669"/>
    <property type="project" value="UniProtKB-UniRule"/>
</dbReference>
<dbReference type="GO" id="GO:0003735">
    <property type="term" value="F:structural constituent of ribosome"/>
    <property type="evidence" value="ECO:0007669"/>
    <property type="project" value="InterPro"/>
</dbReference>
<dbReference type="GO" id="GO:0006412">
    <property type="term" value="P:translation"/>
    <property type="evidence" value="ECO:0007669"/>
    <property type="project" value="UniProtKB-UniRule"/>
</dbReference>
<dbReference type="FunFam" id="3.30.1370.30:FF:000002">
    <property type="entry name" value="30S ribosomal protein S8"/>
    <property type="match status" value="1"/>
</dbReference>
<dbReference type="FunFam" id="3.30.1490.10:FF:000001">
    <property type="entry name" value="30S ribosomal protein S8"/>
    <property type="match status" value="1"/>
</dbReference>
<dbReference type="Gene3D" id="3.30.1370.30">
    <property type="match status" value="1"/>
</dbReference>
<dbReference type="Gene3D" id="3.30.1490.10">
    <property type="match status" value="1"/>
</dbReference>
<dbReference type="HAMAP" id="MF_01302_B">
    <property type="entry name" value="Ribosomal_uS8_B"/>
    <property type="match status" value="1"/>
</dbReference>
<dbReference type="InterPro" id="IPR000630">
    <property type="entry name" value="Ribosomal_uS8"/>
</dbReference>
<dbReference type="InterPro" id="IPR047863">
    <property type="entry name" value="Ribosomal_uS8_CS"/>
</dbReference>
<dbReference type="InterPro" id="IPR035987">
    <property type="entry name" value="Ribosomal_uS8_sf"/>
</dbReference>
<dbReference type="NCBIfam" id="NF001109">
    <property type="entry name" value="PRK00136.1"/>
    <property type="match status" value="1"/>
</dbReference>
<dbReference type="PANTHER" id="PTHR11758">
    <property type="entry name" value="40S RIBOSOMAL PROTEIN S15A"/>
    <property type="match status" value="1"/>
</dbReference>
<dbReference type="Pfam" id="PF00410">
    <property type="entry name" value="Ribosomal_S8"/>
    <property type="match status" value="1"/>
</dbReference>
<dbReference type="SUPFAM" id="SSF56047">
    <property type="entry name" value="Ribosomal protein S8"/>
    <property type="match status" value="1"/>
</dbReference>
<dbReference type="PROSITE" id="PS00053">
    <property type="entry name" value="RIBOSOMAL_S8"/>
    <property type="match status" value="1"/>
</dbReference>
<keyword id="KW-0687">Ribonucleoprotein</keyword>
<keyword id="KW-0689">Ribosomal protein</keyword>
<keyword id="KW-0694">RNA-binding</keyword>
<keyword id="KW-0699">rRNA-binding</keyword>
<comment type="function">
    <text evidence="1">One of the primary rRNA binding proteins, it binds directly to 16S rRNA central domain where it helps coordinate assembly of the platform of the 30S subunit.</text>
</comment>
<comment type="subunit">
    <text evidence="1">Part of the 30S ribosomal subunit. Contacts proteins S5 and S12.</text>
</comment>
<comment type="similarity">
    <text evidence="1">Belongs to the universal ribosomal protein uS8 family.</text>
</comment>
<accession>A7GK34</accession>
<evidence type="ECO:0000255" key="1">
    <source>
        <dbReference type="HAMAP-Rule" id="MF_01302"/>
    </source>
</evidence>
<evidence type="ECO:0000305" key="2"/>
<sequence length="132" mass="14896">MVMTDPIADMLTRIRNANMVRHEKLEVPASKIKKEIAELLKREGFIRDVEYIEDNKQGILRIFLKYGANNERVITGLKRISKPGLRVYAKADEVPRVLNGLGIALLSTSKGVMTDKDARQLQTGGEVVAYVW</sequence>
<reference key="1">
    <citation type="journal article" date="2008" name="Chem. Biol. Interact.">
        <title>Extending the Bacillus cereus group genomics to putative food-borne pathogens of different toxicity.</title>
        <authorList>
            <person name="Lapidus A."/>
            <person name="Goltsman E."/>
            <person name="Auger S."/>
            <person name="Galleron N."/>
            <person name="Segurens B."/>
            <person name="Dossat C."/>
            <person name="Land M.L."/>
            <person name="Broussolle V."/>
            <person name="Brillard J."/>
            <person name="Guinebretiere M.-H."/>
            <person name="Sanchis V."/>
            <person name="Nguen-the C."/>
            <person name="Lereclus D."/>
            <person name="Richardson P."/>
            <person name="Wincker P."/>
            <person name="Weissenbach J."/>
            <person name="Ehrlich S.D."/>
            <person name="Sorokin A."/>
        </authorList>
    </citation>
    <scope>NUCLEOTIDE SEQUENCE [LARGE SCALE GENOMIC DNA]</scope>
    <source>
        <strain>DSM 22905 / CIP 110041 / 391-98 / NVH 391-98</strain>
    </source>
</reference>
<organism>
    <name type="scientific">Bacillus cytotoxicus (strain DSM 22905 / CIP 110041 / 391-98 / NVH 391-98)</name>
    <dbReference type="NCBI Taxonomy" id="315749"/>
    <lineage>
        <taxon>Bacteria</taxon>
        <taxon>Bacillati</taxon>
        <taxon>Bacillota</taxon>
        <taxon>Bacilli</taxon>
        <taxon>Bacillales</taxon>
        <taxon>Bacillaceae</taxon>
        <taxon>Bacillus</taxon>
        <taxon>Bacillus cereus group</taxon>
    </lineage>
</organism>
<gene>
    <name evidence="1" type="primary">rpsH</name>
    <name type="ordered locus">Bcer98_0118</name>
</gene>